<accession>B2K504</accession>
<comment type="function">
    <text evidence="1">Removes the formyl group from the N-terminal Met of newly synthesized proteins. Requires at least a dipeptide for an efficient rate of reaction. N-terminal L-methionine is a prerequisite for activity but the enzyme has broad specificity at other positions.</text>
</comment>
<comment type="catalytic activity">
    <reaction evidence="1">
        <text>N-terminal N-formyl-L-methionyl-[peptide] + H2O = N-terminal L-methionyl-[peptide] + formate</text>
        <dbReference type="Rhea" id="RHEA:24420"/>
        <dbReference type="Rhea" id="RHEA-COMP:10639"/>
        <dbReference type="Rhea" id="RHEA-COMP:10640"/>
        <dbReference type="ChEBI" id="CHEBI:15377"/>
        <dbReference type="ChEBI" id="CHEBI:15740"/>
        <dbReference type="ChEBI" id="CHEBI:49298"/>
        <dbReference type="ChEBI" id="CHEBI:64731"/>
        <dbReference type="EC" id="3.5.1.88"/>
    </reaction>
</comment>
<comment type="cofactor">
    <cofactor evidence="1">
        <name>Fe(2+)</name>
        <dbReference type="ChEBI" id="CHEBI:29033"/>
    </cofactor>
    <text evidence="1">Binds 1 Fe(2+) ion.</text>
</comment>
<comment type="similarity">
    <text evidence="1">Belongs to the polypeptide deformylase family.</text>
</comment>
<keyword id="KW-0378">Hydrolase</keyword>
<keyword id="KW-0408">Iron</keyword>
<keyword id="KW-0479">Metal-binding</keyword>
<keyword id="KW-0648">Protein biosynthesis</keyword>
<proteinExistence type="inferred from homology"/>
<gene>
    <name evidence="1" type="primary">def</name>
    <name type="ordered locus">YPTS_3857</name>
</gene>
<sequence>MSVLQVLHYPDERLRKIAAPVKEVNGEIQRIVDDMFETMYAEEGIGLAATQVDVHQQIIVIDISENRDQRLVLINPELLEKSGETGIEEGCLSIPEQRALVPRAEKVKIRALDRDGKPFELETDGLLAICIQHEMDHLIGKLFVDYLSPLKRQRIRQKLEKMAKLNARAN</sequence>
<dbReference type="EC" id="3.5.1.88" evidence="1"/>
<dbReference type="EMBL" id="CP001048">
    <property type="protein sequence ID" value="ACC90806.1"/>
    <property type="molecule type" value="Genomic_DNA"/>
</dbReference>
<dbReference type="RefSeq" id="WP_002209021.1">
    <property type="nucleotide sequence ID" value="NZ_CP009780.1"/>
</dbReference>
<dbReference type="SMR" id="B2K504"/>
<dbReference type="GeneID" id="57974362"/>
<dbReference type="KEGG" id="ypb:YPTS_3857"/>
<dbReference type="PATRIC" id="fig|502801.10.peg.3322"/>
<dbReference type="GO" id="GO:0046872">
    <property type="term" value="F:metal ion binding"/>
    <property type="evidence" value="ECO:0007669"/>
    <property type="project" value="UniProtKB-KW"/>
</dbReference>
<dbReference type="GO" id="GO:0042586">
    <property type="term" value="F:peptide deformylase activity"/>
    <property type="evidence" value="ECO:0007669"/>
    <property type="project" value="UniProtKB-UniRule"/>
</dbReference>
<dbReference type="GO" id="GO:0043686">
    <property type="term" value="P:co-translational protein modification"/>
    <property type="evidence" value="ECO:0007669"/>
    <property type="project" value="TreeGrafter"/>
</dbReference>
<dbReference type="GO" id="GO:0006412">
    <property type="term" value="P:translation"/>
    <property type="evidence" value="ECO:0007669"/>
    <property type="project" value="UniProtKB-UniRule"/>
</dbReference>
<dbReference type="CDD" id="cd00487">
    <property type="entry name" value="Pep_deformylase"/>
    <property type="match status" value="1"/>
</dbReference>
<dbReference type="FunFam" id="3.90.45.10:FF:000001">
    <property type="entry name" value="Peptide deformylase"/>
    <property type="match status" value="1"/>
</dbReference>
<dbReference type="Gene3D" id="3.90.45.10">
    <property type="entry name" value="Peptide deformylase"/>
    <property type="match status" value="1"/>
</dbReference>
<dbReference type="HAMAP" id="MF_00163">
    <property type="entry name" value="Pep_deformylase"/>
    <property type="match status" value="1"/>
</dbReference>
<dbReference type="InterPro" id="IPR023635">
    <property type="entry name" value="Peptide_deformylase"/>
</dbReference>
<dbReference type="InterPro" id="IPR036821">
    <property type="entry name" value="Peptide_deformylase_sf"/>
</dbReference>
<dbReference type="NCBIfam" id="TIGR00079">
    <property type="entry name" value="pept_deformyl"/>
    <property type="match status" value="1"/>
</dbReference>
<dbReference type="NCBIfam" id="NF001159">
    <property type="entry name" value="PRK00150.1-3"/>
    <property type="match status" value="1"/>
</dbReference>
<dbReference type="PANTHER" id="PTHR10458">
    <property type="entry name" value="PEPTIDE DEFORMYLASE"/>
    <property type="match status" value="1"/>
</dbReference>
<dbReference type="PANTHER" id="PTHR10458:SF21">
    <property type="entry name" value="PEPTIDE DEFORMYLASE"/>
    <property type="match status" value="1"/>
</dbReference>
<dbReference type="Pfam" id="PF01327">
    <property type="entry name" value="Pep_deformylase"/>
    <property type="match status" value="1"/>
</dbReference>
<dbReference type="PIRSF" id="PIRSF004749">
    <property type="entry name" value="Pep_def"/>
    <property type="match status" value="1"/>
</dbReference>
<dbReference type="PRINTS" id="PR01576">
    <property type="entry name" value="PDEFORMYLASE"/>
</dbReference>
<dbReference type="SUPFAM" id="SSF56420">
    <property type="entry name" value="Peptide deformylase"/>
    <property type="match status" value="1"/>
</dbReference>
<organism>
    <name type="scientific">Yersinia pseudotuberculosis serotype IB (strain PB1/+)</name>
    <dbReference type="NCBI Taxonomy" id="502801"/>
    <lineage>
        <taxon>Bacteria</taxon>
        <taxon>Pseudomonadati</taxon>
        <taxon>Pseudomonadota</taxon>
        <taxon>Gammaproteobacteria</taxon>
        <taxon>Enterobacterales</taxon>
        <taxon>Yersiniaceae</taxon>
        <taxon>Yersinia</taxon>
    </lineage>
</organism>
<protein>
    <recommendedName>
        <fullName evidence="1">Peptide deformylase</fullName>
        <shortName evidence="1">PDF</shortName>
        <ecNumber evidence="1">3.5.1.88</ecNumber>
    </recommendedName>
    <alternativeName>
        <fullName evidence="1">Polypeptide deformylase</fullName>
    </alternativeName>
</protein>
<feature type="chain" id="PRO_1000097363" description="Peptide deformylase">
    <location>
        <begin position="1"/>
        <end position="170"/>
    </location>
</feature>
<feature type="active site" evidence="1">
    <location>
        <position position="134"/>
    </location>
</feature>
<feature type="binding site" evidence="1">
    <location>
        <position position="91"/>
    </location>
    <ligand>
        <name>Fe cation</name>
        <dbReference type="ChEBI" id="CHEBI:24875"/>
    </ligand>
</feature>
<feature type="binding site" evidence="1">
    <location>
        <position position="133"/>
    </location>
    <ligand>
        <name>Fe cation</name>
        <dbReference type="ChEBI" id="CHEBI:24875"/>
    </ligand>
</feature>
<feature type="binding site" evidence="1">
    <location>
        <position position="137"/>
    </location>
    <ligand>
        <name>Fe cation</name>
        <dbReference type="ChEBI" id="CHEBI:24875"/>
    </ligand>
</feature>
<reference key="1">
    <citation type="submission" date="2008-04" db="EMBL/GenBank/DDBJ databases">
        <title>Complete sequence of Yersinia pseudotuberculosis PB1/+.</title>
        <authorList>
            <person name="Copeland A."/>
            <person name="Lucas S."/>
            <person name="Lapidus A."/>
            <person name="Glavina del Rio T."/>
            <person name="Dalin E."/>
            <person name="Tice H."/>
            <person name="Bruce D."/>
            <person name="Goodwin L."/>
            <person name="Pitluck S."/>
            <person name="Munk A.C."/>
            <person name="Brettin T."/>
            <person name="Detter J.C."/>
            <person name="Han C."/>
            <person name="Tapia R."/>
            <person name="Schmutz J."/>
            <person name="Larimer F."/>
            <person name="Land M."/>
            <person name="Hauser L."/>
            <person name="Challacombe J.F."/>
            <person name="Green L."/>
            <person name="Lindler L.E."/>
            <person name="Nikolich M.P."/>
            <person name="Richardson P."/>
        </authorList>
    </citation>
    <scope>NUCLEOTIDE SEQUENCE [LARGE SCALE GENOMIC DNA]</scope>
    <source>
        <strain>PB1/+</strain>
    </source>
</reference>
<evidence type="ECO:0000255" key="1">
    <source>
        <dbReference type="HAMAP-Rule" id="MF_00163"/>
    </source>
</evidence>
<name>DEF_YERPB</name>